<keyword id="KW-0025">Alternative splicing</keyword>
<keyword id="KW-0966">Cell projection</keyword>
<keyword id="KW-0969">Cilium</keyword>
<keyword id="KW-0282">Flagellum</keyword>
<keyword id="KW-1267">Proteomics identification</keyword>
<keyword id="KW-1185">Reference proteome</keyword>
<keyword id="KW-0677">Repeat</keyword>
<feature type="chain" id="PRO_0000292840" description="MORN repeat-containing protein 5">
    <location>
        <begin position="1"/>
        <end position="161"/>
    </location>
</feature>
<feature type="repeat" description="MORN 1">
    <location>
        <begin position="8"/>
        <end position="30"/>
    </location>
</feature>
<feature type="repeat" description="MORN 2">
    <location>
        <begin position="31"/>
        <end position="53"/>
    </location>
</feature>
<feature type="repeat" description="MORN 3">
    <location>
        <begin position="54"/>
        <end position="75"/>
    </location>
</feature>
<feature type="splice variant" id="VSP_055496" description="In isoform 2." evidence="3">
    <original>DDDEHEWITRTCRKG</original>
    <variation>GRFLPTLQHVFSSPTYEYVHLYVQMYAHT</variation>
    <location>
        <begin position="147"/>
        <end position="161"/>
    </location>
</feature>
<feature type="sequence conflict" description="In Ref. 1; BAC87653." evidence="4" ref="1">
    <original>T</original>
    <variation>A</variation>
    <location>
        <position position="45"/>
    </location>
</feature>
<reference key="1">
    <citation type="journal article" date="2004" name="Nat. Genet.">
        <title>Complete sequencing and characterization of 21,243 full-length human cDNAs.</title>
        <authorList>
            <person name="Ota T."/>
            <person name="Suzuki Y."/>
            <person name="Nishikawa T."/>
            <person name="Otsuki T."/>
            <person name="Sugiyama T."/>
            <person name="Irie R."/>
            <person name="Wakamatsu A."/>
            <person name="Hayashi K."/>
            <person name="Sato H."/>
            <person name="Nagai K."/>
            <person name="Kimura K."/>
            <person name="Makita H."/>
            <person name="Sekine M."/>
            <person name="Obayashi M."/>
            <person name="Nishi T."/>
            <person name="Shibahara T."/>
            <person name="Tanaka T."/>
            <person name="Ishii S."/>
            <person name="Yamamoto J."/>
            <person name="Saito K."/>
            <person name="Kawai Y."/>
            <person name="Isono Y."/>
            <person name="Nakamura Y."/>
            <person name="Nagahari K."/>
            <person name="Murakami K."/>
            <person name="Yasuda T."/>
            <person name="Iwayanagi T."/>
            <person name="Wagatsuma M."/>
            <person name="Shiratori A."/>
            <person name="Sudo H."/>
            <person name="Hosoiri T."/>
            <person name="Kaku Y."/>
            <person name="Kodaira H."/>
            <person name="Kondo H."/>
            <person name="Sugawara M."/>
            <person name="Takahashi M."/>
            <person name="Kanda K."/>
            <person name="Yokoi T."/>
            <person name="Furuya T."/>
            <person name="Kikkawa E."/>
            <person name="Omura Y."/>
            <person name="Abe K."/>
            <person name="Kamihara K."/>
            <person name="Katsuta N."/>
            <person name="Sato K."/>
            <person name="Tanikawa M."/>
            <person name="Yamazaki M."/>
            <person name="Ninomiya K."/>
            <person name="Ishibashi T."/>
            <person name="Yamashita H."/>
            <person name="Murakawa K."/>
            <person name="Fujimori K."/>
            <person name="Tanai H."/>
            <person name="Kimata M."/>
            <person name="Watanabe M."/>
            <person name="Hiraoka S."/>
            <person name="Chiba Y."/>
            <person name="Ishida S."/>
            <person name="Ono Y."/>
            <person name="Takiguchi S."/>
            <person name="Watanabe S."/>
            <person name="Yosida M."/>
            <person name="Hotuta T."/>
            <person name="Kusano J."/>
            <person name="Kanehori K."/>
            <person name="Takahashi-Fujii A."/>
            <person name="Hara H."/>
            <person name="Tanase T.-O."/>
            <person name="Nomura Y."/>
            <person name="Togiya S."/>
            <person name="Komai F."/>
            <person name="Hara R."/>
            <person name="Takeuchi K."/>
            <person name="Arita M."/>
            <person name="Imose N."/>
            <person name="Musashino K."/>
            <person name="Yuuki H."/>
            <person name="Oshima A."/>
            <person name="Sasaki N."/>
            <person name="Aotsuka S."/>
            <person name="Yoshikawa Y."/>
            <person name="Matsunawa H."/>
            <person name="Ichihara T."/>
            <person name="Shiohata N."/>
            <person name="Sano S."/>
            <person name="Moriya S."/>
            <person name="Momiyama H."/>
            <person name="Satoh N."/>
            <person name="Takami S."/>
            <person name="Terashima Y."/>
            <person name="Suzuki O."/>
            <person name="Nakagawa S."/>
            <person name="Senoh A."/>
            <person name="Mizoguchi H."/>
            <person name="Goto Y."/>
            <person name="Shimizu F."/>
            <person name="Wakebe H."/>
            <person name="Hishigaki H."/>
            <person name="Watanabe T."/>
            <person name="Sugiyama A."/>
            <person name="Takemoto M."/>
            <person name="Kawakami B."/>
            <person name="Yamazaki M."/>
            <person name="Watanabe K."/>
            <person name="Kumagai A."/>
            <person name="Itakura S."/>
            <person name="Fukuzumi Y."/>
            <person name="Fujimori Y."/>
            <person name="Komiyama M."/>
            <person name="Tashiro H."/>
            <person name="Tanigami A."/>
            <person name="Fujiwara T."/>
            <person name="Ono T."/>
            <person name="Yamada K."/>
            <person name="Fujii Y."/>
            <person name="Ozaki K."/>
            <person name="Hirao M."/>
            <person name="Ohmori Y."/>
            <person name="Kawabata A."/>
            <person name="Hikiji T."/>
            <person name="Kobatake N."/>
            <person name="Inagaki H."/>
            <person name="Ikema Y."/>
            <person name="Okamoto S."/>
            <person name="Okitani R."/>
            <person name="Kawakami T."/>
            <person name="Noguchi S."/>
            <person name="Itoh T."/>
            <person name="Shigeta K."/>
            <person name="Senba T."/>
            <person name="Matsumura K."/>
            <person name="Nakajima Y."/>
            <person name="Mizuno T."/>
            <person name="Morinaga M."/>
            <person name="Sasaki M."/>
            <person name="Togashi T."/>
            <person name="Oyama M."/>
            <person name="Hata H."/>
            <person name="Watanabe M."/>
            <person name="Komatsu T."/>
            <person name="Mizushima-Sugano J."/>
            <person name="Satoh T."/>
            <person name="Shirai Y."/>
            <person name="Takahashi Y."/>
            <person name="Nakagawa K."/>
            <person name="Okumura K."/>
            <person name="Nagase T."/>
            <person name="Nomura N."/>
            <person name="Kikuchi H."/>
            <person name="Masuho Y."/>
            <person name="Yamashita R."/>
            <person name="Nakai K."/>
            <person name="Yada T."/>
            <person name="Nakamura Y."/>
            <person name="Ohara O."/>
            <person name="Isogai T."/>
            <person name="Sugano S."/>
        </authorList>
    </citation>
    <scope>NUCLEOTIDE SEQUENCE [LARGE SCALE MRNA] (ISOFORMS 1 AND 2)</scope>
    <source>
        <tissue>Teratocarcinoma</tissue>
        <tissue>Testis</tissue>
    </source>
</reference>
<reference key="2">
    <citation type="journal article" date="2004" name="Nature">
        <title>DNA sequence and analysis of human chromosome 9.</title>
        <authorList>
            <person name="Humphray S.J."/>
            <person name="Oliver K."/>
            <person name="Hunt A.R."/>
            <person name="Plumb R.W."/>
            <person name="Loveland J.E."/>
            <person name="Howe K.L."/>
            <person name="Andrews T.D."/>
            <person name="Searle S."/>
            <person name="Hunt S.E."/>
            <person name="Scott C.E."/>
            <person name="Jones M.C."/>
            <person name="Ainscough R."/>
            <person name="Almeida J.P."/>
            <person name="Ambrose K.D."/>
            <person name="Ashwell R.I.S."/>
            <person name="Babbage A.K."/>
            <person name="Babbage S."/>
            <person name="Bagguley C.L."/>
            <person name="Bailey J."/>
            <person name="Banerjee R."/>
            <person name="Barker D.J."/>
            <person name="Barlow K.F."/>
            <person name="Bates K."/>
            <person name="Beasley H."/>
            <person name="Beasley O."/>
            <person name="Bird C.P."/>
            <person name="Bray-Allen S."/>
            <person name="Brown A.J."/>
            <person name="Brown J.Y."/>
            <person name="Burford D."/>
            <person name="Burrill W."/>
            <person name="Burton J."/>
            <person name="Carder C."/>
            <person name="Carter N.P."/>
            <person name="Chapman J.C."/>
            <person name="Chen Y."/>
            <person name="Clarke G."/>
            <person name="Clark S.Y."/>
            <person name="Clee C.M."/>
            <person name="Clegg S."/>
            <person name="Collier R.E."/>
            <person name="Corby N."/>
            <person name="Crosier M."/>
            <person name="Cummings A.T."/>
            <person name="Davies J."/>
            <person name="Dhami P."/>
            <person name="Dunn M."/>
            <person name="Dutta I."/>
            <person name="Dyer L.W."/>
            <person name="Earthrowl M.E."/>
            <person name="Faulkner L."/>
            <person name="Fleming C.J."/>
            <person name="Frankish A."/>
            <person name="Frankland J.A."/>
            <person name="French L."/>
            <person name="Fricker D.G."/>
            <person name="Garner P."/>
            <person name="Garnett J."/>
            <person name="Ghori J."/>
            <person name="Gilbert J.G.R."/>
            <person name="Glison C."/>
            <person name="Grafham D.V."/>
            <person name="Gribble S."/>
            <person name="Griffiths C."/>
            <person name="Griffiths-Jones S."/>
            <person name="Grocock R."/>
            <person name="Guy J."/>
            <person name="Hall R.E."/>
            <person name="Hammond S."/>
            <person name="Harley J.L."/>
            <person name="Harrison E.S.I."/>
            <person name="Hart E.A."/>
            <person name="Heath P.D."/>
            <person name="Henderson C.D."/>
            <person name="Hopkins B.L."/>
            <person name="Howard P.J."/>
            <person name="Howden P.J."/>
            <person name="Huckle E."/>
            <person name="Johnson C."/>
            <person name="Johnson D."/>
            <person name="Joy A.A."/>
            <person name="Kay M."/>
            <person name="Keenan S."/>
            <person name="Kershaw J.K."/>
            <person name="Kimberley A.M."/>
            <person name="King A."/>
            <person name="Knights A."/>
            <person name="Laird G.K."/>
            <person name="Langford C."/>
            <person name="Lawlor S."/>
            <person name="Leongamornlert D.A."/>
            <person name="Leversha M."/>
            <person name="Lloyd C."/>
            <person name="Lloyd D.M."/>
            <person name="Lovell J."/>
            <person name="Martin S."/>
            <person name="Mashreghi-Mohammadi M."/>
            <person name="Matthews L."/>
            <person name="McLaren S."/>
            <person name="McLay K.E."/>
            <person name="McMurray A."/>
            <person name="Milne S."/>
            <person name="Nickerson T."/>
            <person name="Nisbett J."/>
            <person name="Nordsiek G."/>
            <person name="Pearce A.V."/>
            <person name="Peck A.I."/>
            <person name="Porter K.M."/>
            <person name="Pandian R."/>
            <person name="Pelan S."/>
            <person name="Phillimore B."/>
            <person name="Povey S."/>
            <person name="Ramsey Y."/>
            <person name="Rand V."/>
            <person name="Scharfe M."/>
            <person name="Sehra H.K."/>
            <person name="Shownkeen R."/>
            <person name="Sims S.K."/>
            <person name="Skuce C.D."/>
            <person name="Smith M."/>
            <person name="Steward C.A."/>
            <person name="Swarbreck D."/>
            <person name="Sycamore N."/>
            <person name="Tester J."/>
            <person name="Thorpe A."/>
            <person name="Tracey A."/>
            <person name="Tromans A."/>
            <person name="Thomas D.W."/>
            <person name="Wall M."/>
            <person name="Wallis J.M."/>
            <person name="West A.P."/>
            <person name="Whitehead S.L."/>
            <person name="Willey D.L."/>
            <person name="Williams S.A."/>
            <person name="Wilming L."/>
            <person name="Wray P.W."/>
            <person name="Young L."/>
            <person name="Ashurst J.L."/>
            <person name="Coulson A."/>
            <person name="Blocker H."/>
            <person name="Durbin R.M."/>
            <person name="Sulston J.E."/>
            <person name="Hubbard T."/>
            <person name="Jackson M.J."/>
            <person name="Bentley D.R."/>
            <person name="Beck S."/>
            <person name="Rogers J."/>
            <person name="Dunham I."/>
        </authorList>
    </citation>
    <scope>NUCLEOTIDE SEQUENCE [LARGE SCALE GENOMIC DNA]</scope>
</reference>
<reference key="3">
    <citation type="submission" date="2005-07" db="EMBL/GenBank/DDBJ databases">
        <authorList>
            <person name="Mural R.J."/>
            <person name="Istrail S."/>
            <person name="Sutton G."/>
            <person name="Florea L."/>
            <person name="Halpern A.L."/>
            <person name="Mobarry C.M."/>
            <person name="Lippert R."/>
            <person name="Walenz B."/>
            <person name="Shatkay H."/>
            <person name="Dew I."/>
            <person name="Miller J.R."/>
            <person name="Flanigan M.J."/>
            <person name="Edwards N.J."/>
            <person name="Bolanos R."/>
            <person name="Fasulo D."/>
            <person name="Halldorsson B.V."/>
            <person name="Hannenhalli S."/>
            <person name="Turner R."/>
            <person name="Yooseph S."/>
            <person name="Lu F."/>
            <person name="Nusskern D.R."/>
            <person name="Shue B.C."/>
            <person name="Zheng X.H."/>
            <person name="Zhong F."/>
            <person name="Delcher A.L."/>
            <person name="Huson D.H."/>
            <person name="Kravitz S.A."/>
            <person name="Mouchard L."/>
            <person name="Reinert K."/>
            <person name="Remington K.A."/>
            <person name="Clark A.G."/>
            <person name="Waterman M.S."/>
            <person name="Eichler E.E."/>
            <person name="Adams M.D."/>
            <person name="Hunkapiller M.W."/>
            <person name="Myers E.W."/>
            <person name="Venter J.C."/>
        </authorList>
    </citation>
    <scope>NUCLEOTIDE SEQUENCE [LARGE SCALE GENOMIC DNA]</scope>
</reference>
<reference key="4">
    <citation type="journal article" date="2004" name="Genome Res.">
        <title>The status, quality, and expansion of the NIH full-length cDNA project: the Mammalian Gene Collection (MGC).</title>
        <authorList>
            <consortium name="The MGC Project Team"/>
        </authorList>
    </citation>
    <scope>NUCLEOTIDE SEQUENCE [LARGE SCALE MRNA] (ISOFORM 1)</scope>
</reference>
<reference key="5">
    <citation type="journal article" date="2017" name="PLoS ONE">
        <title>Expression of uncharacterized male germ cell-specific genes and discovery of novel sperm-tail proteins in mice.</title>
        <authorList>
            <person name="Kwon J.T."/>
            <person name="Ham S."/>
            <person name="Jeon S."/>
            <person name="Kim Y."/>
            <person name="Oh S."/>
            <person name="Cho C."/>
        </authorList>
    </citation>
    <scope>TISSUE SPECIFICITY</scope>
</reference>
<evidence type="ECO:0000250" key="1">
    <source>
        <dbReference type="UniProtKB" id="Q9DAI9"/>
    </source>
</evidence>
<evidence type="ECO:0000269" key="2">
    <source>
    </source>
</evidence>
<evidence type="ECO:0000303" key="3">
    <source>
    </source>
</evidence>
<evidence type="ECO:0000305" key="4"/>
<dbReference type="EMBL" id="AK128877">
    <property type="protein sequence ID" value="BAC87653.1"/>
    <property type="molecule type" value="mRNA"/>
</dbReference>
<dbReference type="EMBL" id="AK302081">
    <property type="protein sequence ID" value="BAH13621.1"/>
    <property type="molecule type" value="mRNA"/>
</dbReference>
<dbReference type="EMBL" id="AL162423">
    <property type="status" value="NOT_ANNOTATED_CDS"/>
    <property type="molecule type" value="Genomic_DNA"/>
</dbReference>
<dbReference type="EMBL" id="AL162424">
    <property type="status" value="NOT_ANNOTATED_CDS"/>
    <property type="molecule type" value="Genomic_DNA"/>
</dbReference>
<dbReference type="EMBL" id="CH471090">
    <property type="protein sequence ID" value="EAW87512.1"/>
    <property type="molecule type" value="Genomic_DNA"/>
</dbReference>
<dbReference type="EMBL" id="BC133690">
    <property type="protein sequence ID" value="AAI33691.1"/>
    <property type="molecule type" value="mRNA"/>
</dbReference>
<dbReference type="CCDS" id="CCDS6836.1">
    <molecule id="Q5VZ52-1"/>
</dbReference>
<dbReference type="RefSeq" id="NP_001273757.1">
    <property type="nucleotide sequence ID" value="NM_001286828.1"/>
</dbReference>
<dbReference type="RefSeq" id="NP_940871.2">
    <molecule id="Q5VZ52-1"/>
    <property type="nucleotide sequence ID" value="NM_198469.4"/>
</dbReference>
<dbReference type="RefSeq" id="XP_005251934.1">
    <property type="nucleotide sequence ID" value="XM_005251877.4"/>
</dbReference>
<dbReference type="SMR" id="Q5VZ52"/>
<dbReference type="BioGRID" id="129063">
    <property type="interactions" value="19"/>
</dbReference>
<dbReference type="FunCoup" id="Q5VZ52">
    <property type="interactions" value="22"/>
</dbReference>
<dbReference type="IntAct" id="Q5VZ52">
    <property type="interactions" value="12"/>
</dbReference>
<dbReference type="STRING" id="9606.ENSP00000362869"/>
<dbReference type="iPTMnet" id="Q5VZ52"/>
<dbReference type="PhosphoSitePlus" id="Q5VZ52"/>
<dbReference type="BioMuta" id="MORN5"/>
<dbReference type="DMDM" id="74747757"/>
<dbReference type="MassIVE" id="Q5VZ52"/>
<dbReference type="PaxDb" id="9606-ENSP00000362869"/>
<dbReference type="PeptideAtlas" id="Q5VZ52"/>
<dbReference type="ProteomicsDB" id="65672">
    <molecule id="Q5VZ52-1"/>
</dbReference>
<dbReference type="ProteomicsDB" id="6873"/>
<dbReference type="Antibodypedia" id="16056">
    <property type="antibodies" value="66 antibodies from 14 providers"/>
</dbReference>
<dbReference type="DNASU" id="254956"/>
<dbReference type="Ensembl" id="ENST00000373764.8">
    <molecule id="Q5VZ52-1"/>
    <property type="protein sequence ID" value="ENSP00000362869.3"/>
    <property type="gene ID" value="ENSG00000185681.13"/>
</dbReference>
<dbReference type="GeneID" id="254956"/>
<dbReference type="KEGG" id="hsa:254956"/>
<dbReference type="MANE-Select" id="ENST00000373764.8">
    <property type="protein sequence ID" value="ENSP00000362869.3"/>
    <property type="RefSeq nucleotide sequence ID" value="NM_198469.4"/>
    <property type="RefSeq protein sequence ID" value="NP_940871.2"/>
</dbReference>
<dbReference type="UCSC" id="uc004blw.4">
    <molecule id="Q5VZ52-1"/>
    <property type="organism name" value="human"/>
</dbReference>
<dbReference type="AGR" id="HGNC:17841"/>
<dbReference type="CTD" id="254956"/>
<dbReference type="DisGeNET" id="254956"/>
<dbReference type="GeneCards" id="MORN5"/>
<dbReference type="HGNC" id="HGNC:17841">
    <property type="gene designation" value="MORN5"/>
</dbReference>
<dbReference type="HPA" id="ENSG00000185681">
    <property type="expression patterns" value="Tissue enhanced (choroid plexus, fallopian tube, testis)"/>
</dbReference>
<dbReference type="MIM" id="619837">
    <property type="type" value="gene"/>
</dbReference>
<dbReference type="neXtProt" id="NX_Q5VZ52"/>
<dbReference type="OpenTargets" id="ENSG00000185681"/>
<dbReference type="PharmGKB" id="PA25975"/>
<dbReference type="VEuPathDB" id="HostDB:ENSG00000185681"/>
<dbReference type="eggNOG" id="KOG0231">
    <property type="taxonomic scope" value="Eukaryota"/>
</dbReference>
<dbReference type="GeneTree" id="ENSGT00390000018089"/>
<dbReference type="HOGENOM" id="CLU_117237_0_0_1"/>
<dbReference type="InParanoid" id="Q5VZ52"/>
<dbReference type="OMA" id="NGRMEGK"/>
<dbReference type="OrthoDB" id="300500at2759"/>
<dbReference type="PAN-GO" id="Q5VZ52">
    <property type="GO annotations" value="0 GO annotations based on evolutionary models"/>
</dbReference>
<dbReference type="PhylomeDB" id="Q5VZ52"/>
<dbReference type="TreeFam" id="TF327409"/>
<dbReference type="PathwayCommons" id="Q5VZ52"/>
<dbReference type="SignaLink" id="Q5VZ52"/>
<dbReference type="BioGRID-ORCS" id="254956">
    <property type="hits" value="11 hits in 1139 CRISPR screens"/>
</dbReference>
<dbReference type="GenomeRNAi" id="254956"/>
<dbReference type="Pharos" id="Q5VZ52">
    <property type="development level" value="Tdark"/>
</dbReference>
<dbReference type="PRO" id="PR:Q5VZ52"/>
<dbReference type="Proteomes" id="UP000005640">
    <property type="component" value="Chromosome 9"/>
</dbReference>
<dbReference type="RNAct" id="Q5VZ52">
    <property type="molecule type" value="protein"/>
</dbReference>
<dbReference type="Bgee" id="ENSG00000185681">
    <property type="expression patterns" value="Expressed in bronchial epithelial cell and 123 other cell types or tissues"/>
</dbReference>
<dbReference type="ExpressionAtlas" id="Q5VZ52">
    <property type="expression patterns" value="baseline and differential"/>
</dbReference>
<dbReference type="GO" id="GO:0036126">
    <property type="term" value="C:sperm flagellum"/>
    <property type="evidence" value="ECO:0000250"/>
    <property type="project" value="UniProtKB"/>
</dbReference>
<dbReference type="Gene3D" id="2.20.110.10">
    <property type="entry name" value="Histone H3 K4-specific methyltransferase SET7/9 N-terminal domain"/>
    <property type="match status" value="1"/>
</dbReference>
<dbReference type="InterPro" id="IPR003409">
    <property type="entry name" value="MORN"/>
</dbReference>
<dbReference type="InterPro" id="IPR042814">
    <property type="entry name" value="Morn5"/>
</dbReference>
<dbReference type="PANTHER" id="PTHR46437">
    <property type="entry name" value="MORN REPEAT-CONTAINING PROTEIN 5"/>
    <property type="match status" value="1"/>
</dbReference>
<dbReference type="PANTHER" id="PTHR46437:SF1">
    <property type="entry name" value="MORN REPEAT-CONTAINING PROTEIN 5"/>
    <property type="match status" value="1"/>
</dbReference>
<dbReference type="Pfam" id="PF02493">
    <property type="entry name" value="MORN"/>
    <property type="match status" value="3"/>
</dbReference>
<dbReference type="SMART" id="SM00698">
    <property type="entry name" value="MORN"/>
    <property type="match status" value="2"/>
</dbReference>
<dbReference type="SUPFAM" id="SSF82185">
    <property type="entry name" value="Histone H3 K4-specific methyltransferase SET7/9 N-terminal domain"/>
    <property type="match status" value="1"/>
</dbReference>
<gene>
    <name type="primary">MORN5</name>
    <name type="synonym">C9orf113</name>
    <name type="synonym">C9orf18</name>
</gene>
<name>MORN5_HUMAN</name>
<sequence length="161" mass="18731">MEYTGSKYIGEYVDGRMEGKAKYILPTETIYVGEMKDGMFHGEGTLYFPSGSQYDAIWENGLAIKGTYTFSDGLHYDEKNWHYCDGYDRRFYTEILNGLKPAGMAQLTNMDPPRKIPKGYYDCGDGFYNPVTRVVKDYRNRFLRNADDDEHEWITRTCRKG</sequence>
<accession>Q5VZ52</accession>
<accession>B7Z7I5</accession>
<accession>Q6ZQN1</accession>
<organism>
    <name type="scientific">Homo sapiens</name>
    <name type="common">Human</name>
    <dbReference type="NCBI Taxonomy" id="9606"/>
    <lineage>
        <taxon>Eukaryota</taxon>
        <taxon>Metazoa</taxon>
        <taxon>Chordata</taxon>
        <taxon>Craniata</taxon>
        <taxon>Vertebrata</taxon>
        <taxon>Euteleostomi</taxon>
        <taxon>Mammalia</taxon>
        <taxon>Eutheria</taxon>
        <taxon>Euarchontoglires</taxon>
        <taxon>Primates</taxon>
        <taxon>Haplorrhini</taxon>
        <taxon>Catarrhini</taxon>
        <taxon>Hominidae</taxon>
        <taxon>Homo</taxon>
    </lineage>
</organism>
<proteinExistence type="evidence at protein level"/>
<comment type="interaction">
    <interactant intactId="EBI-12835568">
        <id>Q5VZ52</id>
    </interactant>
    <interactant intactId="EBI-727098">
        <id>P21549</id>
        <label>AGXT</label>
    </interactant>
    <organismsDiffer>false</organismsDiffer>
    <experiments>3</experiments>
</comment>
<comment type="interaction">
    <interactant intactId="EBI-12835568">
        <id>Q5VZ52</id>
    </interactant>
    <interactant intactId="EBI-744099">
        <id>Q9H0I2</id>
        <label>ENKD1</label>
    </interactant>
    <organismsDiffer>false</organismsDiffer>
    <experiments>3</experiments>
</comment>
<comment type="interaction">
    <interactant intactId="EBI-12835568">
        <id>Q5VZ52</id>
    </interactant>
    <interactant intactId="EBI-7960826">
        <id>Q8NHY3</id>
        <label>GAS2L2</label>
    </interactant>
    <organismsDiffer>false</organismsDiffer>
    <experiments>3</experiments>
</comment>
<comment type="interaction">
    <interactant intactId="EBI-12835568">
        <id>Q5VZ52</id>
    </interactant>
    <interactant intactId="EBI-2339359">
        <id>O14929</id>
        <label>HAT1</label>
    </interactant>
    <organismsDiffer>false</organismsDiffer>
    <experiments>5</experiments>
</comment>
<comment type="interaction">
    <interactant intactId="EBI-12835568">
        <id>Q5VZ52</id>
    </interactant>
    <interactant intactId="EBI-2555085">
        <id>Q8IVT2</id>
        <label>MISP</label>
    </interactant>
    <organismsDiffer>false</organismsDiffer>
    <experiments>3</experiments>
</comment>
<comment type="interaction">
    <interactant intactId="EBI-12835568">
        <id>Q5VZ52</id>
    </interactant>
    <interactant intactId="EBI-11956563">
        <id>Q96HA1-2</id>
        <label>POM121</label>
    </interactant>
    <organismsDiffer>false</organismsDiffer>
    <experiments>3</experiments>
</comment>
<comment type="interaction">
    <interactant intactId="EBI-12835568">
        <id>Q5VZ52</id>
    </interactant>
    <interactant intactId="EBI-745021">
        <id>Q96FJ0</id>
        <label>STAMBPL1</label>
    </interactant>
    <organismsDiffer>false</organismsDiffer>
    <experiments>3</experiments>
</comment>
<comment type="interaction">
    <interactant intactId="EBI-12835568">
        <id>Q5VZ52</id>
    </interactant>
    <interactant intactId="EBI-3939165">
        <id>O43711</id>
        <label>TLX3</label>
    </interactant>
    <organismsDiffer>false</organismsDiffer>
    <experiments>3</experiments>
</comment>
<comment type="interaction">
    <interactant intactId="EBI-12835568">
        <id>Q5VZ52</id>
    </interactant>
    <interactant intactId="EBI-743272">
        <id>O75604</id>
        <label>USP2</label>
    </interactant>
    <organismsDiffer>false</organismsDiffer>
    <experiments>3</experiments>
</comment>
<comment type="subcellular location">
    <subcellularLocation>
        <location evidence="1">Cell projection</location>
        <location evidence="1">Cilium</location>
        <location evidence="1">Flagellum</location>
    </subcellularLocation>
</comment>
<comment type="alternative products">
    <event type="alternative splicing"/>
    <isoform>
        <id>Q5VZ52-1</id>
        <name>1</name>
        <sequence type="displayed"/>
    </isoform>
    <isoform>
        <id>Q5VZ52-2</id>
        <name>2</name>
        <sequence type="described" ref="VSP_055496"/>
    </isoform>
</comment>
<comment type="tissue specificity">
    <text evidence="2">Expressed in sperm (at protein level).</text>
</comment>
<protein>
    <recommendedName>
        <fullName>MORN repeat-containing protein 5</fullName>
    </recommendedName>
</protein>